<name>RS11_GEOSW</name>
<feature type="chain" id="PRO_1000214364" description="Small ribosomal subunit protein uS11">
    <location>
        <begin position="1"/>
        <end position="129"/>
    </location>
</feature>
<protein>
    <recommendedName>
        <fullName evidence="1">Small ribosomal subunit protein uS11</fullName>
    </recommendedName>
    <alternativeName>
        <fullName evidence="2">30S ribosomal protein S11</fullName>
    </alternativeName>
</protein>
<dbReference type="EMBL" id="CP001638">
    <property type="protein sequence ID" value="ACS23077.1"/>
    <property type="molecule type" value="Genomic_DNA"/>
</dbReference>
<dbReference type="SMR" id="C5D3U3"/>
<dbReference type="STRING" id="471223.GWCH70_0137"/>
<dbReference type="KEGG" id="gwc:GWCH70_0137"/>
<dbReference type="eggNOG" id="COG0100">
    <property type="taxonomic scope" value="Bacteria"/>
</dbReference>
<dbReference type="HOGENOM" id="CLU_072439_5_0_9"/>
<dbReference type="OrthoDB" id="9806415at2"/>
<dbReference type="GO" id="GO:1990904">
    <property type="term" value="C:ribonucleoprotein complex"/>
    <property type="evidence" value="ECO:0007669"/>
    <property type="project" value="UniProtKB-KW"/>
</dbReference>
<dbReference type="GO" id="GO:0005840">
    <property type="term" value="C:ribosome"/>
    <property type="evidence" value="ECO:0007669"/>
    <property type="project" value="UniProtKB-KW"/>
</dbReference>
<dbReference type="GO" id="GO:0019843">
    <property type="term" value="F:rRNA binding"/>
    <property type="evidence" value="ECO:0007669"/>
    <property type="project" value="UniProtKB-UniRule"/>
</dbReference>
<dbReference type="GO" id="GO:0003735">
    <property type="term" value="F:structural constituent of ribosome"/>
    <property type="evidence" value="ECO:0007669"/>
    <property type="project" value="InterPro"/>
</dbReference>
<dbReference type="GO" id="GO:0006412">
    <property type="term" value="P:translation"/>
    <property type="evidence" value="ECO:0007669"/>
    <property type="project" value="UniProtKB-UniRule"/>
</dbReference>
<dbReference type="FunFam" id="3.30.420.80:FF:000001">
    <property type="entry name" value="30S ribosomal protein S11"/>
    <property type="match status" value="1"/>
</dbReference>
<dbReference type="Gene3D" id="3.30.420.80">
    <property type="entry name" value="Ribosomal protein S11"/>
    <property type="match status" value="1"/>
</dbReference>
<dbReference type="HAMAP" id="MF_01310">
    <property type="entry name" value="Ribosomal_uS11"/>
    <property type="match status" value="1"/>
</dbReference>
<dbReference type="InterPro" id="IPR001971">
    <property type="entry name" value="Ribosomal_uS11"/>
</dbReference>
<dbReference type="InterPro" id="IPR019981">
    <property type="entry name" value="Ribosomal_uS11_bac-type"/>
</dbReference>
<dbReference type="InterPro" id="IPR018102">
    <property type="entry name" value="Ribosomal_uS11_CS"/>
</dbReference>
<dbReference type="InterPro" id="IPR036967">
    <property type="entry name" value="Ribosomal_uS11_sf"/>
</dbReference>
<dbReference type="NCBIfam" id="NF003698">
    <property type="entry name" value="PRK05309.1"/>
    <property type="match status" value="1"/>
</dbReference>
<dbReference type="NCBIfam" id="TIGR03632">
    <property type="entry name" value="uS11_bact"/>
    <property type="match status" value="1"/>
</dbReference>
<dbReference type="PANTHER" id="PTHR11759">
    <property type="entry name" value="40S RIBOSOMAL PROTEIN S14/30S RIBOSOMAL PROTEIN S11"/>
    <property type="match status" value="1"/>
</dbReference>
<dbReference type="Pfam" id="PF00411">
    <property type="entry name" value="Ribosomal_S11"/>
    <property type="match status" value="1"/>
</dbReference>
<dbReference type="PIRSF" id="PIRSF002131">
    <property type="entry name" value="Ribosomal_S11"/>
    <property type="match status" value="1"/>
</dbReference>
<dbReference type="SUPFAM" id="SSF53137">
    <property type="entry name" value="Translational machinery components"/>
    <property type="match status" value="1"/>
</dbReference>
<dbReference type="PROSITE" id="PS00054">
    <property type="entry name" value="RIBOSOMAL_S11"/>
    <property type="match status" value="1"/>
</dbReference>
<proteinExistence type="inferred from homology"/>
<sequence length="129" mass="13826">MARKTNTRKRRVRKNIETGIAHIRSTFNNTIVTITDVHGNTIAWSSAGALGFKGSRKSTPFAAQMAAEAAAKASMEHGMKTVEVNVKGPGAGREAAIRALQAAGLEITAIKDVTPIPHNGCRPPKRRRV</sequence>
<accession>C5D3U3</accession>
<gene>
    <name evidence="1" type="primary">rpsK</name>
    <name type="ordered locus">GWCH70_0137</name>
</gene>
<keyword id="KW-0687">Ribonucleoprotein</keyword>
<keyword id="KW-0689">Ribosomal protein</keyword>
<keyword id="KW-0694">RNA-binding</keyword>
<keyword id="KW-0699">rRNA-binding</keyword>
<organism>
    <name type="scientific">Geobacillus sp. (strain WCH70)</name>
    <dbReference type="NCBI Taxonomy" id="471223"/>
    <lineage>
        <taxon>Bacteria</taxon>
        <taxon>Bacillati</taxon>
        <taxon>Bacillota</taxon>
        <taxon>Bacilli</taxon>
        <taxon>Bacillales</taxon>
        <taxon>Anoxybacillaceae</taxon>
        <taxon>Geobacillus</taxon>
    </lineage>
</organism>
<evidence type="ECO:0000255" key="1">
    <source>
        <dbReference type="HAMAP-Rule" id="MF_01310"/>
    </source>
</evidence>
<evidence type="ECO:0000305" key="2"/>
<reference key="1">
    <citation type="submission" date="2009-06" db="EMBL/GenBank/DDBJ databases">
        <title>Complete sequence of chromosome of Geopacillus sp. WCH70.</title>
        <authorList>
            <consortium name="US DOE Joint Genome Institute"/>
            <person name="Lucas S."/>
            <person name="Copeland A."/>
            <person name="Lapidus A."/>
            <person name="Glavina del Rio T."/>
            <person name="Dalin E."/>
            <person name="Tice H."/>
            <person name="Bruce D."/>
            <person name="Goodwin L."/>
            <person name="Pitluck S."/>
            <person name="Chertkov O."/>
            <person name="Brettin T."/>
            <person name="Detter J.C."/>
            <person name="Han C."/>
            <person name="Larimer F."/>
            <person name="Land M."/>
            <person name="Hauser L."/>
            <person name="Kyrpides N."/>
            <person name="Mikhailova N."/>
            <person name="Brumm P."/>
            <person name="Mead D.A."/>
            <person name="Richardson P."/>
        </authorList>
    </citation>
    <scope>NUCLEOTIDE SEQUENCE [LARGE SCALE GENOMIC DNA]</scope>
    <source>
        <strain>WCH70</strain>
    </source>
</reference>
<comment type="function">
    <text evidence="1">Located on the platform of the 30S subunit, it bridges several disparate RNA helices of the 16S rRNA. Forms part of the Shine-Dalgarno cleft in the 70S ribosome.</text>
</comment>
<comment type="subunit">
    <text evidence="1">Part of the 30S ribosomal subunit. Interacts with proteins S7 and S18. Binds to IF-3.</text>
</comment>
<comment type="similarity">
    <text evidence="1">Belongs to the universal ribosomal protein uS11 family.</text>
</comment>